<protein>
    <recommendedName>
        <fullName evidence="2">Large ribosomal subunit protein uL2c</fullName>
    </recommendedName>
    <alternativeName>
        <fullName evidence="4">50S ribosomal protein L2, cyanelle</fullName>
    </alternativeName>
</protein>
<organism>
    <name type="scientific">Cyanophora paradoxa</name>
    <dbReference type="NCBI Taxonomy" id="2762"/>
    <lineage>
        <taxon>Eukaryota</taxon>
        <taxon>Glaucocystophyceae</taxon>
        <taxon>Cyanophoraceae</taxon>
        <taxon>Cyanophora</taxon>
    </lineage>
</organism>
<keyword id="KW-0194">Cyanelle</keyword>
<keyword id="KW-0934">Plastid</keyword>
<keyword id="KW-0687">Ribonucleoprotein</keyword>
<keyword id="KW-0689">Ribosomal protein</keyword>
<keyword id="KW-0694">RNA-binding</keyword>
<keyword id="KW-0699">rRNA-binding</keyword>
<dbReference type="EMBL" id="X17498">
    <property type="protein sequence ID" value="CAA35537.1"/>
    <property type="molecule type" value="Genomic_DNA"/>
</dbReference>
<dbReference type="EMBL" id="U30821">
    <property type="protein sequence ID" value="AAA81230.1"/>
    <property type="molecule type" value="Genomic_DNA"/>
</dbReference>
<dbReference type="PIR" id="S08234">
    <property type="entry name" value="R5KT2"/>
</dbReference>
<dbReference type="RefSeq" id="NP_043199.1">
    <property type="nucleotide sequence ID" value="NC_001675.1"/>
</dbReference>
<dbReference type="SMR" id="P15764"/>
<dbReference type="GeneID" id="801548"/>
<dbReference type="GO" id="GO:0009842">
    <property type="term" value="C:cyanelle"/>
    <property type="evidence" value="ECO:0007669"/>
    <property type="project" value="UniProtKB-SubCell"/>
</dbReference>
<dbReference type="GO" id="GO:0005762">
    <property type="term" value="C:mitochondrial large ribosomal subunit"/>
    <property type="evidence" value="ECO:0007669"/>
    <property type="project" value="TreeGrafter"/>
</dbReference>
<dbReference type="GO" id="GO:0019843">
    <property type="term" value="F:rRNA binding"/>
    <property type="evidence" value="ECO:0007669"/>
    <property type="project" value="UniProtKB-KW"/>
</dbReference>
<dbReference type="GO" id="GO:0003735">
    <property type="term" value="F:structural constituent of ribosome"/>
    <property type="evidence" value="ECO:0007669"/>
    <property type="project" value="InterPro"/>
</dbReference>
<dbReference type="GO" id="GO:0016740">
    <property type="term" value="F:transferase activity"/>
    <property type="evidence" value="ECO:0007669"/>
    <property type="project" value="InterPro"/>
</dbReference>
<dbReference type="GO" id="GO:0032543">
    <property type="term" value="P:mitochondrial translation"/>
    <property type="evidence" value="ECO:0007669"/>
    <property type="project" value="TreeGrafter"/>
</dbReference>
<dbReference type="FunFam" id="2.30.30.30:FF:000001">
    <property type="entry name" value="50S ribosomal protein L2"/>
    <property type="match status" value="1"/>
</dbReference>
<dbReference type="FunFam" id="2.40.50.140:FF:000003">
    <property type="entry name" value="50S ribosomal protein L2"/>
    <property type="match status" value="1"/>
</dbReference>
<dbReference type="FunFam" id="4.10.950.10:FF:000001">
    <property type="entry name" value="50S ribosomal protein L2"/>
    <property type="match status" value="1"/>
</dbReference>
<dbReference type="Gene3D" id="2.30.30.30">
    <property type="match status" value="1"/>
</dbReference>
<dbReference type="Gene3D" id="2.40.50.140">
    <property type="entry name" value="Nucleic acid-binding proteins"/>
    <property type="match status" value="1"/>
</dbReference>
<dbReference type="Gene3D" id="4.10.950.10">
    <property type="entry name" value="Ribosomal protein L2, domain 3"/>
    <property type="match status" value="1"/>
</dbReference>
<dbReference type="HAMAP" id="MF_01320_B">
    <property type="entry name" value="Ribosomal_uL2_B"/>
    <property type="match status" value="1"/>
</dbReference>
<dbReference type="InterPro" id="IPR012340">
    <property type="entry name" value="NA-bd_OB-fold"/>
</dbReference>
<dbReference type="InterPro" id="IPR014722">
    <property type="entry name" value="Rib_uL2_dom2"/>
</dbReference>
<dbReference type="InterPro" id="IPR002171">
    <property type="entry name" value="Ribosomal_uL2"/>
</dbReference>
<dbReference type="InterPro" id="IPR005880">
    <property type="entry name" value="Ribosomal_uL2_bac/org-type"/>
</dbReference>
<dbReference type="InterPro" id="IPR022669">
    <property type="entry name" value="Ribosomal_uL2_C"/>
</dbReference>
<dbReference type="InterPro" id="IPR022671">
    <property type="entry name" value="Ribosomal_uL2_CS"/>
</dbReference>
<dbReference type="InterPro" id="IPR014726">
    <property type="entry name" value="Ribosomal_uL2_dom3"/>
</dbReference>
<dbReference type="InterPro" id="IPR022666">
    <property type="entry name" value="Ribosomal_uL2_RNA-bd_dom"/>
</dbReference>
<dbReference type="InterPro" id="IPR008991">
    <property type="entry name" value="Translation_prot_SH3-like_sf"/>
</dbReference>
<dbReference type="NCBIfam" id="TIGR01171">
    <property type="entry name" value="rplB_bact"/>
    <property type="match status" value="1"/>
</dbReference>
<dbReference type="PANTHER" id="PTHR13691:SF5">
    <property type="entry name" value="LARGE RIBOSOMAL SUBUNIT PROTEIN UL2M"/>
    <property type="match status" value="1"/>
</dbReference>
<dbReference type="PANTHER" id="PTHR13691">
    <property type="entry name" value="RIBOSOMAL PROTEIN L2"/>
    <property type="match status" value="1"/>
</dbReference>
<dbReference type="Pfam" id="PF00181">
    <property type="entry name" value="Ribosomal_L2"/>
    <property type="match status" value="1"/>
</dbReference>
<dbReference type="Pfam" id="PF03947">
    <property type="entry name" value="Ribosomal_L2_C"/>
    <property type="match status" value="1"/>
</dbReference>
<dbReference type="PIRSF" id="PIRSF002158">
    <property type="entry name" value="Ribosomal_L2"/>
    <property type="match status" value="1"/>
</dbReference>
<dbReference type="SMART" id="SM01383">
    <property type="entry name" value="Ribosomal_L2"/>
    <property type="match status" value="1"/>
</dbReference>
<dbReference type="SMART" id="SM01382">
    <property type="entry name" value="Ribosomal_L2_C"/>
    <property type="match status" value="1"/>
</dbReference>
<dbReference type="SUPFAM" id="SSF50249">
    <property type="entry name" value="Nucleic acid-binding proteins"/>
    <property type="match status" value="1"/>
</dbReference>
<dbReference type="SUPFAM" id="SSF50104">
    <property type="entry name" value="Translation proteins SH3-like domain"/>
    <property type="match status" value="1"/>
</dbReference>
<dbReference type="PROSITE" id="PS00467">
    <property type="entry name" value="RIBOSOMAL_L2"/>
    <property type="match status" value="1"/>
</dbReference>
<name>RK2_CYAPA</name>
<geneLocation type="cyanelle"/>
<gene>
    <name type="primary">rpl2</name>
</gene>
<feature type="chain" id="PRO_0000129660" description="Large ribosomal subunit protein uL2c">
    <location>
        <begin position="1"/>
        <end position="275"/>
    </location>
</feature>
<feature type="region of interest" description="Disordered" evidence="3">
    <location>
        <begin position="225"/>
        <end position="259"/>
    </location>
</feature>
<reference key="1">
    <citation type="journal article" date="1990" name="J. Mol. Evol.">
        <title>The nucleotide sequence of five ribosomal protein genes from the cyanelles of Cyanophora paradoxa: implications concerning the phylogenetic relationship between cyanelles and chloroplasts.</title>
        <authorList>
            <person name="Evrard J.L."/>
            <person name="Kuntz M."/>
            <person name="Weil J.H."/>
        </authorList>
    </citation>
    <scope>NUCLEOTIDE SEQUENCE [GENOMIC DNA]</scope>
    <source>
        <strain>UTEX LB 555 / Pringsheim</strain>
    </source>
</reference>
<reference key="2">
    <citation type="journal article" date="1995" name="Plant Mol. Biol. Rep.">
        <title>Nucleotide sequence of the cyanelle DNA from Cyanophora paradoxa.</title>
        <authorList>
            <person name="Stirewalt V.L."/>
            <person name="Michalowski C.B."/>
            <person name="Loeffelhardt W."/>
            <person name="Bohnert H.J."/>
            <person name="Bryant D.A."/>
        </authorList>
    </citation>
    <scope>NUCLEOTIDE SEQUENCE [LARGE SCALE GENOMIC DNA]</scope>
    <source>
        <strain>UTEX LB 555 / Pringsheim</strain>
    </source>
</reference>
<reference key="3">
    <citation type="book" date="1997" name="Eukaryotism and symbiosis">
        <title>The complete sequence of the cyanelle genome of Cyanophora paradoxa: the genetic complexity of a primitive plastid.</title>
        <editorList>
            <person name="Schenk H.E.A."/>
            <person name="Herrmann R."/>
            <person name="Jeon K.W."/>
            <person name="Mueller N.E."/>
            <person name="Schwemmler W."/>
        </editorList>
        <authorList>
            <person name="Loeffelhardt W."/>
            <person name="Stirewalt V.L."/>
            <person name="Michalowski C.B."/>
            <person name="Annarella M."/>
            <person name="Farley J.Y."/>
            <person name="Schluchter W.M."/>
            <person name="Chung S."/>
            <person name="Newmann-Spallart C."/>
            <person name="Steiner J.M."/>
            <person name="Jakowitsch J."/>
            <person name="Bohnert H.J."/>
            <person name="Bryant D.A."/>
        </authorList>
    </citation>
    <scope>NUCLEOTIDE SEQUENCE [LARGE SCALE GENOMIC DNA]</scope>
    <source>
        <strain>UTEX LB 555 / Pringsheim</strain>
    </source>
</reference>
<evidence type="ECO:0000250" key="1"/>
<evidence type="ECO:0000255" key="2">
    <source>
        <dbReference type="HAMAP-Rule" id="MF_01320"/>
    </source>
</evidence>
<evidence type="ECO:0000256" key="3">
    <source>
        <dbReference type="SAM" id="MobiDB-lite"/>
    </source>
</evidence>
<evidence type="ECO:0000305" key="4"/>
<accession>P15764</accession>
<sequence>MAIRSYKAYTPGTRNRTISEFSEITKSEPEKSLTFLKHRKKGRNNRGIITTAHKGGGSKRLYRIIDFKRDLKLVPAKVAAIEYDPNRNARIALLHYQNGEKGYILHARGLAVGNMVYSGPNAPIEVGNSLPLSEIPLATEIHNIELTPGKGGQLVRSAGSSAQLLAKEGNYVTLRLPSGEMRFVRKECYATIGQIGNAEISNISIGKAGRNRWLGIRPTVRGVVKNPVDHPHGGGEGRAPIGRSTPVTPWGKPALGRRTRRTKKYSDNLIIRRRK</sequence>
<comment type="subunit">
    <text evidence="1">Part of the 50S ribosomal subunit.</text>
</comment>
<comment type="subcellular location">
    <subcellularLocation>
        <location>Plastid</location>
        <location>Cyanelle</location>
    </subcellularLocation>
</comment>
<comment type="similarity">
    <text evidence="4">Belongs to the universal ribosomal protein uL2 family.</text>
</comment>
<proteinExistence type="inferred from homology"/>